<organism>
    <name type="scientific">Arabidopsis thaliana</name>
    <name type="common">Mouse-ear cress</name>
    <dbReference type="NCBI Taxonomy" id="3702"/>
    <lineage>
        <taxon>Eukaryota</taxon>
        <taxon>Viridiplantae</taxon>
        <taxon>Streptophyta</taxon>
        <taxon>Embryophyta</taxon>
        <taxon>Tracheophyta</taxon>
        <taxon>Spermatophyta</taxon>
        <taxon>Magnoliopsida</taxon>
        <taxon>eudicotyledons</taxon>
        <taxon>Gunneridae</taxon>
        <taxon>Pentapetalae</taxon>
        <taxon>rosids</taxon>
        <taxon>malvids</taxon>
        <taxon>Brassicales</taxon>
        <taxon>Brassicaceae</taxon>
        <taxon>Camelineae</taxon>
        <taxon>Arabidopsis</taxon>
    </lineage>
</organism>
<name>AGL6_ARATH</name>
<gene>
    <name type="primary">AGL6</name>
    <name type="ordered locus">At2g45650</name>
    <name type="ORF">F17K2.18</name>
</gene>
<dbReference type="EMBL" id="M55554">
    <property type="protein sequence ID" value="AAA79328.1"/>
    <property type="molecule type" value="mRNA"/>
</dbReference>
<dbReference type="EMBL" id="AC003680">
    <property type="protein sequence ID" value="AAC06173.1"/>
    <property type="molecule type" value="Genomic_DNA"/>
</dbReference>
<dbReference type="EMBL" id="CP002685">
    <property type="protein sequence ID" value="AEC10582.1"/>
    <property type="molecule type" value="Genomic_DNA"/>
</dbReference>
<dbReference type="PIR" id="F39534">
    <property type="entry name" value="F39534"/>
</dbReference>
<dbReference type="RefSeq" id="NP_182089.1">
    <property type="nucleotide sequence ID" value="NM_130127.2"/>
</dbReference>
<dbReference type="SMR" id="P29386"/>
<dbReference type="BioGRID" id="4509">
    <property type="interactions" value="21"/>
</dbReference>
<dbReference type="DIP" id="DIP-33737N"/>
<dbReference type="FunCoup" id="P29386">
    <property type="interactions" value="35"/>
</dbReference>
<dbReference type="IntAct" id="P29386">
    <property type="interactions" value="22"/>
</dbReference>
<dbReference type="STRING" id="3702.P29386"/>
<dbReference type="PaxDb" id="3702-AT2G45650.1"/>
<dbReference type="ProteomicsDB" id="244917"/>
<dbReference type="EnsemblPlants" id="AT2G45650.1">
    <property type="protein sequence ID" value="AT2G45650.1"/>
    <property type="gene ID" value="AT2G45650"/>
</dbReference>
<dbReference type="GeneID" id="819173"/>
<dbReference type="Gramene" id="AT2G45650.1">
    <property type="protein sequence ID" value="AT2G45650.1"/>
    <property type="gene ID" value="AT2G45650"/>
</dbReference>
<dbReference type="KEGG" id="ath:AT2G45650"/>
<dbReference type="Araport" id="AT2G45650"/>
<dbReference type="TAIR" id="AT2G45650">
    <property type="gene designation" value="AGL6"/>
</dbReference>
<dbReference type="eggNOG" id="KOG0014">
    <property type="taxonomic scope" value="Eukaryota"/>
</dbReference>
<dbReference type="HOGENOM" id="CLU_053053_0_2_1"/>
<dbReference type="InParanoid" id="P29386"/>
<dbReference type="OMA" id="NFVQGWV"/>
<dbReference type="PhylomeDB" id="P29386"/>
<dbReference type="PRO" id="PR:P29386"/>
<dbReference type="Proteomes" id="UP000006548">
    <property type="component" value="Chromosome 2"/>
</dbReference>
<dbReference type="ExpressionAtlas" id="P29386">
    <property type="expression patterns" value="baseline and differential"/>
</dbReference>
<dbReference type="GO" id="GO:0005634">
    <property type="term" value="C:nucleus"/>
    <property type="evidence" value="ECO:0007669"/>
    <property type="project" value="UniProtKB-SubCell"/>
</dbReference>
<dbReference type="GO" id="GO:0003700">
    <property type="term" value="F:DNA-binding transcription factor activity"/>
    <property type="evidence" value="ECO:0000250"/>
    <property type="project" value="TAIR"/>
</dbReference>
<dbReference type="GO" id="GO:0046983">
    <property type="term" value="F:protein dimerization activity"/>
    <property type="evidence" value="ECO:0007669"/>
    <property type="project" value="InterPro"/>
</dbReference>
<dbReference type="GO" id="GO:0000977">
    <property type="term" value="F:RNA polymerase II transcription regulatory region sequence-specific DNA binding"/>
    <property type="evidence" value="ECO:0007669"/>
    <property type="project" value="InterPro"/>
</dbReference>
<dbReference type="GO" id="GO:0000976">
    <property type="term" value="F:transcription cis-regulatory region binding"/>
    <property type="evidence" value="ECO:0000353"/>
    <property type="project" value="TAIR"/>
</dbReference>
<dbReference type="GO" id="GO:0030154">
    <property type="term" value="P:cell differentiation"/>
    <property type="evidence" value="ECO:0007669"/>
    <property type="project" value="UniProtKB-KW"/>
</dbReference>
<dbReference type="GO" id="GO:0048437">
    <property type="term" value="P:floral organ development"/>
    <property type="evidence" value="ECO:0000315"/>
    <property type="project" value="TAIR"/>
</dbReference>
<dbReference type="GO" id="GO:0009911">
    <property type="term" value="P:positive regulation of flower development"/>
    <property type="evidence" value="ECO:0000315"/>
    <property type="project" value="TAIR"/>
</dbReference>
<dbReference type="GO" id="GO:0045944">
    <property type="term" value="P:positive regulation of transcription by RNA polymerase II"/>
    <property type="evidence" value="ECO:0007669"/>
    <property type="project" value="InterPro"/>
</dbReference>
<dbReference type="GO" id="GO:0010228">
    <property type="term" value="P:vegetative to reproductive phase transition of meristem"/>
    <property type="evidence" value="ECO:0000315"/>
    <property type="project" value="TAIR"/>
</dbReference>
<dbReference type="CDD" id="cd00265">
    <property type="entry name" value="MADS_MEF2_like"/>
    <property type="match status" value="1"/>
</dbReference>
<dbReference type="FunFam" id="3.40.1810.10:FF:000030">
    <property type="entry name" value="Agamous-like MADS-box protein AGL13"/>
    <property type="match status" value="1"/>
</dbReference>
<dbReference type="Gene3D" id="3.40.1810.10">
    <property type="entry name" value="Transcription factor, MADS-box"/>
    <property type="match status" value="1"/>
</dbReference>
<dbReference type="InterPro" id="IPR050142">
    <property type="entry name" value="MADS-box/MEF2_TF"/>
</dbReference>
<dbReference type="InterPro" id="IPR033896">
    <property type="entry name" value="MEF2-like_N"/>
</dbReference>
<dbReference type="InterPro" id="IPR002487">
    <property type="entry name" value="TF_Kbox"/>
</dbReference>
<dbReference type="InterPro" id="IPR002100">
    <property type="entry name" value="TF_MADSbox"/>
</dbReference>
<dbReference type="InterPro" id="IPR036879">
    <property type="entry name" value="TF_MADSbox_sf"/>
</dbReference>
<dbReference type="PANTHER" id="PTHR48019">
    <property type="entry name" value="SERUM RESPONSE FACTOR HOMOLOG"/>
    <property type="match status" value="1"/>
</dbReference>
<dbReference type="Pfam" id="PF01486">
    <property type="entry name" value="K-box"/>
    <property type="match status" value="1"/>
</dbReference>
<dbReference type="Pfam" id="PF00319">
    <property type="entry name" value="SRF-TF"/>
    <property type="match status" value="1"/>
</dbReference>
<dbReference type="PRINTS" id="PR00404">
    <property type="entry name" value="MADSDOMAIN"/>
</dbReference>
<dbReference type="SMART" id="SM00432">
    <property type="entry name" value="MADS"/>
    <property type="match status" value="1"/>
</dbReference>
<dbReference type="SUPFAM" id="SSF55455">
    <property type="entry name" value="SRF-like"/>
    <property type="match status" value="1"/>
</dbReference>
<dbReference type="PROSITE" id="PS51297">
    <property type="entry name" value="K_BOX"/>
    <property type="match status" value="1"/>
</dbReference>
<dbReference type="PROSITE" id="PS00350">
    <property type="entry name" value="MADS_BOX_1"/>
    <property type="match status" value="1"/>
</dbReference>
<dbReference type="PROSITE" id="PS50066">
    <property type="entry name" value="MADS_BOX_2"/>
    <property type="match status" value="1"/>
</dbReference>
<protein>
    <recommendedName>
        <fullName>Agamous-like MADS-box protein AGL6</fullName>
    </recommendedName>
</protein>
<reference key="1">
    <citation type="journal article" date="1991" name="Genes Dev.">
        <title>AGL1-AGL6, an Arabidopsis gene family with similarity to floral homeotic and transcription factor genes.</title>
        <authorList>
            <person name="Ma H."/>
            <person name="Yanofsky M.F."/>
            <person name="Meyerowitz E.M."/>
        </authorList>
    </citation>
    <scope>NUCLEOTIDE SEQUENCE [MRNA]</scope>
    <source>
        <strain>cv. Landsberg erecta</strain>
    </source>
</reference>
<reference key="2">
    <citation type="journal article" date="1999" name="Nature">
        <title>Sequence and analysis of chromosome 2 of the plant Arabidopsis thaliana.</title>
        <authorList>
            <person name="Lin X."/>
            <person name="Kaul S."/>
            <person name="Rounsley S.D."/>
            <person name="Shea T.P."/>
            <person name="Benito M.-I."/>
            <person name="Town C.D."/>
            <person name="Fujii C.Y."/>
            <person name="Mason T.M."/>
            <person name="Bowman C.L."/>
            <person name="Barnstead M.E."/>
            <person name="Feldblyum T.V."/>
            <person name="Buell C.R."/>
            <person name="Ketchum K.A."/>
            <person name="Lee J.J."/>
            <person name="Ronning C.M."/>
            <person name="Koo H.L."/>
            <person name="Moffat K.S."/>
            <person name="Cronin L.A."/>
            <person name="Shen M."/>
            <person name="Pai G."/>
            <person name="Van Aken S."/>
            <person name="Umayam L."/>
            <person name="Tallon L.J."/>
            <person name="Gill J.E."/>
            <person name="Adams M.D."/>
            <person name="Carrera A.J."/>
            <person name="Creasy T.H."/>
            <person name="Goodman H.M."/>
            <person name="Somerville C.R."/>
            <person name="Copenhaver G.P."/>
            <person name="Preuss D."/>
            <person name="Nierman W.C."/>
            <person name="White O."/>
            <person name="Eisen J.A."/>
            <person name="Salzberg S.L."/>
            <person name="Fraser C.M."/>
            <person name="Venter J.C."/>
        </authorList>
    </citation>
    <scope>NUCLEOTIDE SEQUENCE [LARGE SCALE GENOMIC DNA]</scope>
    <source>
        <strain>cv. Columbia</strain>
    </source>
</reference>
<reference key="3">
    <citation type="journal article" date="2017" name="Plant J.">
        <title>Araport11: a complete reannotation of the Arabidopsis thaliana reference genome.</title>
        <authorList>
            <person name="Cheng C.Y."/>
            <person name="Krishnakumar V."/>
            <person name="Chan A.P."/>
            <person name="Thibaud-Nissen F."/>
            <person name="Schobel S."/>
            <person name="Town C.D."/>
        </authorList>
    </citation>
    <scope>GENOME REANNOTATION</scope>
    <source>
        <strain>cv. Columbia</strain>
    </source>
</reference>
<reference key="4">
    <citation type="journal article" date="1997" name="Plant J.">
        <title>Specific interactions between the K domains of AG and AGLs, members of the MADS domain family of DNA binding proteins.</title>
        <authorList>
            <person name="Fan H.-Y."/>
            <person name="Hu Y."/>
            <person name="Tudor M."/>
            <person name="Ma H."/>
        </authorList>
    </citation>
    <scope>CHARACTERIZATION</scope>
</reference>
<reference key="5">
    <citation type="journal article" date="2005" name="Plant Cell">
        <title>Comprehensive interaction map of the Arabidopsis MADS Box transcription factors.</title>
        <authorList>
            <person name="de Folter S."/>
            <person name="Immink R.G.H."/>
            <person name="Kieffer M."/>
            <person name="Parenicova L."/>
            <person name="Henz S.R."/>
            <person name="Weigel D."/>
            <person name="Busscher M."/>
            <person name="Kooiker M."/>
            <person name="Colombo L."/>
            <person name="Kater M.M."/>
            <person name="Davies B."/>
            <person name="Angenent G.C."/>
        </authorList>
    </citation>
    <scope>INTERACTION WITH AGL15 AND AGL16</scope>
</reference>
<proteinExistence type="evidence at protein level"/>
<accession>P29386</accession>
<evidence type="ECO:0000255" key="1"/>
<evidence type="ECO:0000255" key="2">
    <source>
        <dbReference type="PROSITE-ProRule" id="PRU00251"/>
    </source>
</evidence>
<evidence type="ECO:0000255" key="3">
    <source>
        <dbReference type="PROSITE-ProRule" id="PRU00629"/>
    </source>
</evidence>
<evidence type="ECO:0000269" key="4">
    <source>
    </source>
</evidence>
<feature type="chain" id="PRO_0000199460" description="Agamous-like MADS-box protein AGL6">
    <location>
        <begin position="1"/>
        <end position="252"/>
    </location>
</feature>
<feature type="domain" description="MADS-box" evidence="2">
    <location>
        <begin position="3"/>
        <end position="57"/>
    </location>
</feature>
<feature type="domain" description="K-box" evidence="3">
    <location>
        <begin position="86"/>
        <end position="176"/>
    </location>
</feature>
<feature type="coiled-coil region" evidence="1">
    <location>
        <begin position="91"/>
        <end position="173"/>
    </location>
</feature>
<keyword id="KW-0175">Coiled coil</keyword>
<keyword id="KW-0217">Developmental protein</keyword>
<keyword id="KW-0221">Differentiation</keyword>
<keyword id="KW-0238">DNA-binding</keyword>
<keyword id="KW-0287">Flowering</keyword>
<keyword id="KW-0539">Nucleus</keyword>
<keyword id="KW-1185">Reference proteome</keyword>
<keyword id="KW-0804">Transcription</keyword>
<keyword id="KW-0805">Transcription regulation</keyword>
<sequence length="252" mass="28745">MGRGRVEMKRIENKINRQVTFSKRRNGLLKKAYELSVLCDAEVALIIFSSRGKLYEFGSVGIESTIERYNRCYNCSLSNNKPEETTQSWCQEVTKLKSKYESLVRTNRNLLGEDLGEMGVKELQALERQLEAALTATRQRKTQVMMEEMEDLRKKERQLGDINKQLKIKFETEGHAFKTFQDLWANSAASVAGDPNNSEFPVEPSHPNVLDCNTEPFLQIGFQQHYYVQGEGSSVSKSNVAGETNFVQGWVL</sequence>
<comment type="function">
    <text>Probable transcription factor. Forms a heterodimer via the K-box domain with AG, that could be involved in genes regulation during floral meristem development.</text>
</comment>
<comment type="subunit">
    <text evidence="4">Forms a heterodimer with AGAMOUS. Interacts with AGL15 and AGL16.</text>
</comment>
<comment type="subcellular location">
    <subcellularLocation>
        <location>Nucleus</location>
    </subcellularLocation>
</comment>
<comment type="tissue specificity">
    <text>Preferentially expressed in flowers.</text>
</comment>